<gene>
    <name type="primary">DHPS1</name>
    <name type="synonym">DAPA</name>
</gene>
<comment type="function">
    <text evidence="1">Catalyzes the condensation of (S)-aspartate-beta-semialdehyde [(S)-ASA] and pyruvate to 4-hydroxy-tetrahydrodipicolinate (HTPA).</text>
</comment>
<comment type="catalytic activity">
    <reaction>
        <text>L-aspartate 4-semialdehyde + pyruvate = (2S,4S)-4-hydroxy-2,3,4,5-tetrahydrodipicolinate + H2O + H(+)</text>
        <dbReference type="Rhea" id="RHEA:34171"/>
        <dbReference type="ChEBI" id="CHEBI:15361"/>
        <dbReference type="ChEBI" id="CHEBI:15377"/>
        <dbReference type="ChEBI" id="CHEBI:15378"/>
        <dbReference type="ChEBI" id="CHEBI:67139"/>
        <dbReference type="ChEBI" id="CHEBI:537519"/>
        <dbReference type="EC" id="4.3.3.7"/>
    </reaction>
</comment>
<comment type="pathway">
    <text>Amino-acid biosynthesis; L-lysine biosynthesis via DAP pathway; (S)-tetrahydrodipicolinate from L-aspartate: step 3/4.</text>
</comment>
<comment type="subcellular location">
    <subcellularLocation>
        <location>Plastid</location>
        <location>Chloroplast</location>
    </subcellularLocation>
</comment>
<comment type="similarity">
    <text evidence="3">Belongs to the DapA family.</text>
</comment>
<comment type="caution">
    <text evidence="3">Was originally thought to be a dihydrodipicolinate synthase (DHDPS), catalyzing the condensation of (S)-aspartate-beta-semialdehyde [(S)-ASA] and pyruvate to dihydrodipicolinate (DHDP). However, it was shown in E.coli that the product of the enzymatic reaction is not dihydrodipicolinate but in fact (4S)-4-hydroxy-2,3,4,5-tetrahydro-(2S)-dipicolinic acid (HTPA), and that the consecutive dehydration reaction leading to DHDP is not spontaneous but catalyzed by DapB.</text>
</comment>
<reference key="1">
    <citation type="journal article" date="1994" name="Plant Mol. Biol.">
        <title>Cloning and expression of the soybean DapA gene encoding dihydrodipicolinate synthase.</title>
        <authorList>
            <person name="Silk G.W."/>
            <person name="Matthews B.F."/>
            <person name="Somers D.A."/>
            <person name="Gengenbach B.G."/>
        </authorList>
    </citation>
    <scope>NUCLEOTIDE SEQUENCE [MRNA]</scope>
    <source>
        <strain>cv. Century</strain>
        <tissue>Leaf</tissue>
    </source>
</reference>
<accession>Q42800</accession>
<sequence>MITNSAAVKPNFHLPMRSFELKNRTSPEDIKALRLITAIKTPYLPDGRFDLEAYDDLVNMQIGQGAEGVIVGGTTGEGQLMSWEEHIILIAHTVNCFGGKIKVIGNTGSNSTREAIHATEQGFAVGMHAALHINPYYGKTSLDGMVAHFRSVLSMGPTIIYNVPARTGQDIPPHVIQTLAESVNLAGVKECVGNDRIKQYTDDGIVVWSGNDDQCHDARWGYGATGVVSVASNLVPGLMRELMFGGVNPTLNSKLLPLIDWLFHMPNPIGLNTALAQLGVIRPVFRLPFVPLPVDKRIEFANLVKEIGREHFVGNKVVEVLDDDDFFLVSRY</sequence>
<evidence type="ECO:0000250" key="1"/>
<evidence type="ECO:0000255" key="2"/>
<evidence type="ECO:0000305" key="3"/>
<feature type="transit peptide" description="Chloroplast" evidence="2">
    <location>
        <begin position="1"/>
        <end status="unknown"/>
    </location>
</feature>
<feature type="chain" id="PRO_0000007201" description="4-hydroxy-tetrahydrodipicolinate synthase, chloroplastic">
    <location>
        <begin status="unknown"/>
        <end position="332"/>
    </location>
</feature>
<feature type="active site" description="Proton donor/acceptor" evidence="1">
    <location>
        <position position="161"/>
    </location>
</feature>
<feature type="active site" description="Schiff-base intermediate with substrate" evidence="1">
    <location>
        <position position="189"/>
    </location>
</feature>
<feature type="binding site" evidence="1">
    <location>
        <position position="75"/>
    </location>
    <ligand>
        <name>pyruvate</name>
        <dbReference type="ChEBI" id="CHEBI:15361"/>
    </ligand>
</feature>
<feature type="binding site" evidence="1">
    <location>
        <position position="228"/>
    </location>
    <ligand>
        <name>pyruvate</name>
        <dbReference type="ChEBI" id="CHEBI:15361"/>
    </ligand>
</feature>
<feature type="site" description="Part of a proton relay during catalysis" evidence="1">
    <location>
        <position position="74"/>
    </location>
</feature>
<feature type="site" description="Part of a proton relay during catalysis" evidence="1">
    <location>
        <position position="137"/>
    </location>
</feature>
<organism>
    <name type="scientific">Glycine max</name>
    <name type="common">Soybean</name>
    <name type="synonym">Glycine hispida</name>
    <dbReference type="NCBI Taxonomy" id="3847"/>
    <lineage>
        <taxon>Eukaryota</taxon>
        <taxon>Viridiplantae</taxon>
        <taxon>Streptophyta</taxon>
        <taxon>Embryophyta</taxon>
        <taxon>Tracheophyta</taxon>
        <taxon>Spermatophyta</taxon>
        <taxon>Magnoliopsida</taxon>
        <taxon>eudicotyledons</taxon>
        <taxon>Gunneridae</taxon>
        <taxon>Pentapetalae</taxon>
        <taxon>rosids</taxon>
        <taxon>fabids</taxon>
        <taxon>Fabales</taxon>
        <taxon>Fabaceae</taxon>
        <taxon>Papilionoideae</taxon>
        <taxon>50 kb inversion clade</taxon>
        <taxon>NPAAA clade</taxon>
        <taxon>indigoferoid/millettioid clade</taxon>
        <taxon>Phaseoleae</taxon>
        <taxon>Glycine</taxon>
        <taxon>Glycine subgen. Soja</taxon>
    </lineage>
</organism>
<protein>
    <recommendedName>
        <fullName>4-hydroxy-tetrahydrodipicolinate synthase, chloroplastic</fullName>
        <shortName>HTPA synthase</shortName>
        <ecNumber>4.3.3.7</ecNumber>
    </recommendedName>
</protein>
<name>DAPA_SOYBN</name>
<keyword id="KW-0028">Amino-acid biosynthesis</keyword>
<keyword id="KW-0150">Chloroplast</keyword>
<keyword id="KW-0220">Diaminopimelate biosynthesis</keyword>
<keyword id="KW-0456">Lyase</keyword>
<keyword id="KW-0457">Lysine biosynthesis</keyword>
<keyword id="KW-0934">Plastid</keyword>
<keyword id="KW-1185">Reference proteome</keyword>
<keyword id="KW-0704">Schiff base</keyword>
<keyword id="KW-0809">Transit peptide</keyword>
<dbReference type="EC" id="4.3.3.7"/>
<dbReference type="EMBL" id="L36436">
    <property type="protein sequence ID" value="AAA73555.1"/>
    <property type="molecule type" value="mRNA"/>
</dbReference>
<dbReference type="PIR" id="S50750">
    <property type="entry name" value="S50750"/>
</dbReference>
<dbReference type="RefSeq" id="NP_001238299.1">
    <property type="nucleotide sequence ID" value="NM_001251370.1"/>
</dbReference>
<dbReference type="SMR" id="Q42800"/>
<dbReference type="FunCoup" id="Q42800">
    <property type="interactions" value="1156"/>
</dbReference>
<dbReference type="STRING" id="3847.Q42800"/>
<dbReference type="PaxDb" id="3847-GLYMA18G45380.1"/>
<dbReference type="GeneID" id="548067"/>
<dbReference type="KEGG" id="gmx:548067"/>
<dbReference type="eggNOG" id="ENOG502QQ8M">
    <property type="taxonomic scope" value="Eukaryota"/>
</dbReference>
<dbReference type="InParanoid" id="Q42800"/>
<dbReference type="OrthoDB" id="191315at2759"/>
<dbReference type="UniPathway" id="UPA00034">
    <property type="reaction ID" value="UER00017"/>
</dbReference>
<dbReference type="Proteomes" id="UP000008827">
    <property type="component" value="Unplaced"/>
</dbReference>
<dbReference type="GO" id="GO:0009507">
    <property type="term" value="C:chloroplast"/>
    <property type="evidence" value="ECO:0007669"/>
    <property type="project" value="UniProtKB-SubCell"/>
</dbReference>
<dbReference type="GO" id="GO:0008840">
    <property type="term" value="F:4-hydroxy-tetrahydrodipicolinate synthase activity"/>
    <property type="evidence" value="ECO:0000318"/>
    <property type="project" value="GO_Central"/>
</dbReference>
<dbReference type="GO" id="GO:0019877">
    <property type="term" value="P:diaminopimelate biosynthetic process"/>
    <property type="evidence" value="ECO:0007669"/>
    <property type="project" value="UniProtKB-KW"/>
</dbReference>
<dbReference type="GO" id="GO:0009089">
    <property type="term" value="P:lysine biosynthetic process via diaminopimelate"/>
    <property type="evidence" value="ECO:0007669"/>
    <property type="project" value="UniProtKB-UniPathway"/>
</dbReference>
<dbReference type="CDD" id="cd00950">
    <property type="entry name" value="DHDPS"/>
    <property type="match status" value="1"/>
</dbReference>
<dbReference type="Gene3D" id="3.20.20.70">
    <property type="entry name" value="Aldolase class I"/>
    <property type="match status" value="1"/>
</dbReference>
<dbReference type="InterPro" id="IPR013785">
    <property type="entry name" value="Aldolase_TIM"/>
</dbReference>
<dbReference type="InterPro" id="IPR005263">
    <property type="entry name" value="DapA"/>
</dbReference>
<dbReference type="InterPro" id="IPR002220">
    <property type="entry name" value="DapA-like"/>
</dbReference>
<dbReference type="InterPro" id="IPR020625">
    <property type="entry name" value="Schiff_base-form_aldolases_AS"/>
</dbReference>
<dbReference type="InterPro" id="IPR020624">
    <property type="entry name" value="Schiff_base-form_aldolases_CS"/>
</dbReference>
<dbReference type="NCBIfam" id="TIGR00674">
    <property type="entry name" value="dapA"/>
    <property type="match status" value="1"/>
</dbReference>
<dbReference type="PANTHER" id="PTHR12128:SF15">
    <property type="entry name" value="4-HYDROXY-TETRAHYDRODIPICOLINATE SYNTHASE 1, CHLOROPLASTIC"/>
    <property type="match status" value="1"/>
</dbReference>
<dbReference type="PANTHER" id="PTHR12128">
    <property type="entry name" value="DIHYDRODIPICOLINATE SYNTHASE"/>
    <property type="match status" value="1"/>
</dbReference>
<dbReference type="Pfam" id="PF00701">
    <property type="entry name" value="DHDPS"/>
    <property type="match status" value="1"/>
</dbReference>
<dbReference type="PIRSF" id="PIRSF001365">
    <property type="entry name" value="DHDPS"/>
    <property type="match status" value="1"/>
</dbReference>
<dbReference type="PRINTS" id="PR00146">
    <property type="entry name" value="DHPICSNTHASE"/>
</dbReference>
<dbReference type="SMART" id="SM01130">
    <property type="entry name" value="DHDPS"/>
    <property type="match status" value="1"/>
</dbReference>
<dbReference type="SUPFAM" id="SSF51569">
    <property type="entry name" value="Aldolase"/>
    <property type="match status" value="1"/>
</dbReference>
<dbReference type="PROSITE" id="PS00665">
    <property type="entry name" value="DHDPS_1"/>
    <property type="match status" value="1"/>
</dbReference>
<dbReference type="PROSITE" id="PS00666">
    <property type="entry name" value="DHDPS_2"/>
    <property type="match status" value="1"/>
</dbReference>
<proteinExistence type="evidence at transcript level"/>